<dbReference type="EC" id="3.1.13.-" evidence="1"/>
<dbReference type="EMBL" id="AE009439">
    <property type="protein sequence ID" value="AAM01596.1"/>
    <property type="molecule type" value="Genomic_DNA"/>
</dbReference>
<dbReference type="RefSeq" id="WP_011018751.1">
    <property type="nucleotide sequence ID" value="NC_003551.1"/>
</dbReference>
<dbReference type="SMR" id="Q8TYC1"/>
<dbReference type="STRING" id="190192.MK0381"/>
<dbReference type="PaxDb" id="190192-MK0381"/>
<dbReference type="EnsemblBacteria" id="AAM01596">
    <property type="protein sequence ID" value="AAM01596"/>
    <property type="gene ID" value="MK0381"/>
</dbReference>
<dbReference type="GeneID" id="1477684"/>
<dbReference type="KEGG" id="mka:MK0381"/>
<dbReference type="PATRIC" id="fig|190192.8.peg.407"/>
<dbReference type="HOGENOM" id="CLU_063514_0_0_2"/>
<dbReference type="InParanoid" id="Q8TYC1"/>
<dbReference type="OrthoDB" id="24266at2157"/>
<dbReference type="Proteomes" id="UP000001826">
    <property type="component" value="Chromosome"/>
</dbReference>
<dbReference type="GO" id="GO:0000177">
    <property type="term" value="C:cytoplasmic exosome (RNase complex)"/>
    <property type="evidence" value="ECO:0007669"/>
    <property type="project" value="TreeGrafter"/>
</dbReference>
<dbReference type="GO" id="GO:0000175">
    <property type="term" value="F:3'-5'-RNA exonuclease activity"/>
    <property type="evidence" value="ECO:0007669"/>
    <property type="project" value="UniProtKB-UniRule"/>
</dbReference>
<dbReference type="GO" id="GO:0003723">
    <property type="term" value="F:RNA binding"/>
    <property type="evidence" value="ECO:0007669"/>
    <property type="project" value="TreeGrafter"/>
</dbReference>
<dbReference type="GO" id="GO:0010467">
    <property type="term" value="P:gene expression"/>
    <property type="evidence" value="ECO:0007669"/>
    <property type="project" value="UniProtKB-ARBA"/>
</dbReference>
<dbReference type="GO" id="GO:0016075">
    <property type="term" value="P:rRNA catabolic process"/>
    <property type="evidence" value="ECO:0007669"/>
    <property type="project" value="TreeGrafter"/>
</dbReference>
<dbReference type="CDD" id="cd11366">
    <property type="entry name" value="RNase_PH_archRRP41"/>
    <property type="match status" value="1"/>
</dbReference>
<dbReference type="FunFam" id="3.30.230.70:FF:000004">
    <property type="entry name" value="Exosome complex component Rrp41"/>
    <property type="match status" value="1"/>
</dbReference>
<dbReference type="Gene3D" id="3.30.230.70">
    <property type="entry name" value="GHMP Kinase, N-terminal domain"/>
    <property type="match status" value="1"/>
</dbReference>
<dbReference type="HAMAP" id="MF_00591">
    <property type="entry name" value="Exosome_Rrp41"/>
    <property type="match status" value="1"/>
</dbReference>
<dbReference type="InterPro" id="IPR001247">
    <property type="entry name" value="ExoRNase_PH_dom1"/>
</dbReference>
<dbReference type="InterPro" id="IPR015847">
    <property type="entry name" value="ExoRNase_PH_dom2"/>
</dbReference>
<dbReference type="InterPro" id="IPR036345">
    <property type="entry name" value="ExoRNase_PH_dom2_sf"/>
</dbReference>
<dbReference type="InterPro" id="IPR027408">
    <property type="entry name" value="PNPase/RNase_PH_dom_sf"/>
</dbReference>
<dbReference type="InterPro" id="IPR020568">
    <property type="entry name" value="Ribosomal_Su5_D2-typ_SF"/>
</dbReference>
<dbReference type="InterPro" id="IPR050080">
    <property type="entry name" value="RNase_PH"/>
</dbReference>
<dbReference type="InterPro" id="IPR011807">
    <property type="entry name" value="Rrp41"/>
</dbReference>
<dbReference type="NCBIfam" id="TIGR02065">
    <property type="entry name" value="ECX1"/>
    <property type="match status" value="1"/>
</dbReference>
<dbReference type="PANTHER" id="PTHR11953">
    <property type="entry name" value="EXOSOME COMPLEX COMPONENT"/>
    <property type="match status" value="1"/>
</dbReference>
<dbReference type="PANTHER" id="PTHR11953:SF0">
    <property type="entry name" value="EXOSOME COMPLEX COMPONENT RRP41"/>
    <property type="match status" value="1"/>
</dbReference>
<dbReference type="Pfam" id="PF01138">
    <property type="entry name" value="RNase_PH"/>
    <property type="match status" value="1"/>
</dbReference>
<dbReference type="Pfam" id="PF03725">
    <property type="entry name" value="RNase_PH_C"/>
    <property type="match status" value="1"/>
</dbReference>
<dbReference type="SUPFAM" id="SSF55666">
    <property type="entry name" value="Ribonuclease PH domain 2-like"/>
    <property type="match status" value="1"/>
</dbReference>
<dbReference type="SUPFAM" id="SSF54211">
    <property type="entry name" value="Ribosomal protein S5 domain 2-like"/>
    <property type="match status" value="1"/>
</dbReference>
<gene>
    <name evidence="1" type="primary">rrp41</name>
    <name type="ordered locus">MK0381</name>
</gene>
<accession>Q8TYC1</accession>
<proteinExistence type="inferred from homology"/>
<evidence type="ECO:0000255" key="1">
    <source>
        <dbReference type="HAMAP-Rule" id="MF_00591"/>
    </source>
</evidence>
<evidence type="ECO:0000256" key="2">
    <source>
        <dbReference type="SAM" id="MobiDB-lite"/>
    </source>
</evidence>
<keyword id="KW-0963">Cytoplasm</keyword>
<keyword id="KW-0269">Exonuclease</keyword>
<keyword id="KW-0271">Exosome</keyword>
<keyword id="KW-0378">Hydrolase</keyword>
<keyword id="KW-0540">Nuclease</keyword>
<keyword id="KW-1185">Reference proteome</keyword>
<comment type="function">
    <text evidence="1">Catalytic component of the exosome, which is a complex involved in RNA degradation. Has 3'-&gt;5' exoribonuclease activity. Can also synthesize heteromeric RNA-tails.</text>
</comment>
<comment type="subunit">
    <text evidence="1">Component of the archaeal exosome complex. Forms a hexameric ring-like arrangement composed of 3 Rrp41-Rrp42 heterodimers. The hexameric ring associates with a trimer of Rrp4 and/or Csl4 subunits.</text>
</comment>
<comment type="subcellular location">
    <subcellularLocation>
        <location evidence="1">Cytoplasm</location>
    </subcellularLocation>
</comment>
<comment type="similarity">
    <text evidence="1">Belongs to the RNase PH family. Rrp41 subfamily.</text>
</comment>
<sequence length="239" mass="26515">MEERPERLISEDGLRLDGRKPDEMRPLKIQAGVLKRADGSAYLELGANKIVAAVYGPRELHPRHKQKPDRAVVRFRYNMAPFSVDERKRPGPDRRSIEISKLSKEALEPAIFTEYYPRTAIDIFVEVLQADAGTRCAGISAASVALADAGIEMRDLVAACAAGKVEGKVVLDPMYYEDGYGEADVPLAMMPKEGKITLLQMDGDMTPGEFKQAVKLAKKGCKIVYKEQRRALKEKYGGD</sequence>
<organism>
    <name type="scientific">Methanopyrus kandleri (strain AV19 / DSM 6324 / JCM 9639 / NBRC 100938)</name>
    <dbReference type="NCBI Taxonomy" id="190192"/>
    <lineage>
        <taxon>Archaea</taxon>
        <taxon>Methanobacteriati</taxon>
        <taxon>Methanobacteriota</taxon>
        <taxon>Methanomada group</taxon>
        <taxon>Methanopyri</taxon>
        <taxon>Methanopyrales</taxon>
        <taxon>Methanopyraceae</taxon>
        <taxon>Methanopyrus</taxon>
    </lineage>
</organism>
<protein>
    <recommendedName>
        <fullName evidence="1">Exosome complex component Rrp41</fullName>
        <ecNumber evidence="1">3.1.13.-</ecNumber>
    </recommendedName>
</protein>
<name>RRP41_METKA</name>
<feature type="chain" id="PRO_0000139982" description="Exosome complex component Rrp41">
    <location>
        <begin position="1"/>
        <end position="239"/>
    </location>
</feature>
<feature type="region of interest" description="Disordered" evidence="2">
    <location>
        <begin position="1"/>
        <end position="21"/>
    </location>
</feature>
<reference key="1">
    <citation type="journal article" date="2002" name="Proc. Natl. Acad. Sci. U.S.A.">
        <title>The complete genome of hyperthermophile Methanopyrus kandleri AV19 and monophyly of archaeal methanogens.</title>
        <authorList>
            <person name="Slesarev A.I."/>
            <person name="Mezhevaya K.V."/>
            <person name="Makarova K.S."/>
            <person name="Polushin N.N."/>
            <person name="Shcherbinina O.V."/>
            <person name="Shakhova V.V."/>
            <person name="Belova G.I."/>
            <person name="Aravind L."/>
            <person name="Natale D.A."/>
            <person name="Rogozin I.B."/>
            <person name="Tatusov R.L."/>
            <person name="Wolf Y.I."/>
            <person name="Stetter K.O."/>
            <person name="Malykh A.G."/>
            <person name="Koonin E.V."/>
            <person name="Kozyavkin S.A."/>
        </authorList>
    </citation>
    <scope>NUCLEOTIDE SEQUENCE [LARGE SCALE GENOMIC DNA]</scope>
    <source>
        <strain>AV19 / DSM 6324 / JCM 9639 / NBRC 100938</strain>
    </source>
</reference>